<accession>P37822</accession>
<name>AROG_SOLTU</name>
<proteinExistence type="evidence at transcript level"/>
<evidence type="ECO:0000305" key="1"/>
<protein>
    <recommendedName>
        <fullName>Phospho-2-dehydro-3-deoxyheptonate aldolase 2, chloroplastic</fullName>
        <ecNumber>2.5.1.54</ecNumber>
    </recommendedName>
    <alternativeName>
        <fullName>3-deoxy-D-arabino-heptulosonate 7-phosphate synthase 2</fullName>
    </alternativeName>
    <alternativeName>
        <fullName>DAHP synthase 2</fullName>
    </alternativeName>
    <alternativeName>
        <fullName>Phospho-2-keto-3-deoxyheptonate aldolase 2</fullName>
    </alternativeName>
</protein>
<sequence length="511" mass="56924">MALSNTLSLSSSKSLVQSHLLHNPLPQPRFSLFPTTQHGRRHPISAVHAAEPSKTAVKQGKWSLDSWKTKKALQLPEYPDEKELESVLKTLEMNPPLVFAGEARSLEEKLGEAALGKAFLLQGGDCAESFKEFNANNIRDTFRILLQMSVVLMFGGQVPVIKVGRMAGQFAKPRSDPLEEINGVKLPSYKGDNINGDTFDEKSRIPDPHRLIRAYMQSAATLNLLRAFATGGYAAMQRVTEWNLDFVENCEQGDRYQELAHRVDEALGFMAAAGLTVDHPIMSTTDFWTSHECLLLPYEQALTREDSTSGLFYDCSAHMVWVGERTRQLDGAHVEFLRGVANPLGIKVSQKMDPNELIKLIDILNPANKPGRITVIVRMGAENMRVKLSHLVRAVRGAGQIVTWVCDPMHGNTIKAPCGLKTRAFDSILAEVRAFFDVHEQEGSHPGGIHLEMTGQNVTECIGGSRTVTYDDLGSRYHTHCDPRLNASQSLELSFIVAERLRRRRMSTQRL</sequence>
<feature type="transit peptide" description="Chloroplast">
    <location>
        <begin position="1"/>
        <end status="unknown"/>
    </location>
</feature>
<feature type="chain" id="PRO_0000002303" description="Phospho-2-dehydro-3-deoxyheptonate aldolase 2, chloroplastic">
    <location>
        <begin status="unknown"/>
        <end position="511"/>
    </location>
</feature>
<organism>
    <name type="scientific">Solanum tuberosum</name>
    <name type="common">Potato</name>
    <dbReference type="NCBI Taxonomy" id="4113"/>
    <lineage>
        <taxon>Eukaryota</taxon>
        <taxon>Viridiplantae</taxon>
        <taxon>Streptophyta</taxon>
        <taxon>Embryophyta</taxon>
        <taxon>Tracheophyta</taxon>
        <taxon>Spermatophyta</taxon>
        <taxon>Magnoliopsida</taxon>
        <taxon>eudicotyledons</taxon>
        <taxon>Gunneridae</taxon>
        <taxon>Pentapetalae</taxon>
        <taxon>asterids</taxon>
        <taxon>lamiids</taxon>
        <taxon>Solanales</taxon>
        <taxon>Solanaceae</taxon>
        <taxon>Solanoideae</taxon>
        <taxon>Solaneae</taxon>
        <taxon>Solanum</taxon>
    </lineage>
</organism>
<reference key="1">
    <citation type="journal article" date="1992" name="Plant Physiol.">
        <title>Cloning and sequencing of a second cDNA encoding 3-deoxy-d-arabino-heptulosonate 7-phosphate synthase from Solanum tuberosum L.</title>
        <authorList>
            <person name="Zhao J."/>
            <person name="Herrmann K.M."/>
        </authorList>
    </citation>
    <scope>NUCLEOTIDE SEQUENCE [MRNA]</scope>
    <source>
        <strain>cv. Superior</strain>
        <tissue>Tuber</tissue>
    </source>
</reference>
<dbReference type="EC" id="2.5.1.54"/>
<dbReference type="EMBL" id="M95201">
    <property type="protein sequence ID" value="AAA33840.1"/>
    <property type="molecule type" value="mRNA"/>
</dbReference>
<dbReference type="RefSeq" id="NP_001275399.1">
    <property type="nucleotide sequence ID" value="NM_001288470.1"/>
</dbReference>
<dbReference type="SMR" id="P37822"/>
<dbReference type="FunCoup" id="P37822">
    <property type="interactions" value="559"/>
</dbReference>
<dbReference type="STRING" id="4113.P37822"/>
<dbReference type="PaxDb" id="4113-PGSC0003DMT400041818"/>
<dbReference type="GeneID" id="102577887"/>
<dbReference type="KEGG" id="sot:102577887"/>
<dbReference type="eggNOG" id="ENOG502QPP7">
    <property type="taxonomic scope" value="Eukaryota"/>
</dbReference>
<dbReference type="InParanoid" id="P37822"/>
<dbReference type="OrthoDB" id="2338at2759"/>
<dbReference type="UniPathway" id="UPA00053">
    <property type="reaction ID" value="UER00084"/>
</dbReference>
<dbReference type="Proteomes" id="UP000011115">
    <property type="component" value="Unassembled WGS sequence"/>
</dbReference>
<dbReference type="ExpressionAtlas" id="P37822">
    <property type="expression patterns" value="baseline and differential"/>
</dbReference>
<dbReference type="GO" id="GO:0009507">
    <property type="term" value="C:chloroplast"/>
    <property type="evidence" value="ECO:0007669"/>
    <property type="project" value="UniProtKB-SubCell"/>
</dbReference>
<dbReference type="GO" id="GO:0003849">
    <property type="term" value="F:3-deoxy-7-phosphoheptulonate synthase activity"/>
    <property type="evidence" value="ECO:0007669"/>
    <property type="project" value="UniProtKB-EC"/>
</dbReference>
<dbReference type="GO" id="GO:0008652">
    <property type="term" value="P:amino acid biosynthetic process"/>
    <property type="evidence" value="ECO:0007669"/>
    <property type="project" value="UniProtKB-KW"/>
</dbReference>
<dbReference type="GO" id="GO:0009073">
    <property type="term" value="P:aromatic amino acid family biosynthetic process"/>
    <property type="evidence" value="ECO:0007669"/>
    <property type="project" value="UniProtKB-KW"/>
</dbReference>
<dbReference type="GO" id="GO:0009423">
    <property type="term" value="P:chorismate biosynthetic process"/>
    <property type="evidence" value="ECO:0007669"/>
    <property type="project" value="UniProtKB-UniPathway"/>
</dbReference>
<dbReference type="FunFam" id="3.20.20.70:FF:000128">
    <property type="entry name" value="Phospho-2-dehydro-3-deoxyheptonate aldolase"/>
    <property type="match status" value="1"/>
</dbReference>
<dbReference type="Gene3D" id="3.20.20.70">
    <property type="entry name" value="Aldolase class I"/>
    <property type="match status" value="1"/>
</dbReference>
<dbReference type="InterPro" id="IPR013785">
    <property type="entry name" value="Aldolase_TIM"/>
</dbReference>
<dbReference type="InterPro" id="IPR002480">
    <property type="entry name" value="DAHP_synth_2"/>
</dbReference>
<dbReference type="NCBIfam" id="TIGR01358">
    <property type="entry name" value="DAHP_synth_II"/>
    <property type="match status" value="1"/>
</dbReference>
<dbReference type="PANTHER" id="PTHR21337">
    <property type="entry name" value="PHOSPHO-2-DEHYDRO-3-DEOXYHEPTONATE ALDOLASE 1, 2"/>
    <property type="match status" value="1"/>
</dbReference>
<dbReference type="PANTHER" id="PTHR21337:SF24">
    <property type="entry name" value="PHOSPHO-2-DEHYDRO-3-DEOXYHEPTONATE ALDOLASE 1, CHLOROPLASTIC"/>
    <property type="match status" value="1"/>
</dbReference>
<dbReference type="Pfam" id="PF01474">
    <property type="entry name" value="DAHP_synth_2"/>
    <property type="match status" value="1"/>
</dbReference>
<dbReference type="SUPFAM" id="SSF51569">
    <property type="entry name" value="Aldolase"/>
    <property type="match status" value="1"/>
</dbReference>
<comment type="catalytic activity">
    <reaction>
        <text>D-erythrose 4-phosphate + phosphoenolpyruvate + H2O = 7-phospho-2-dehydro-3-deoxy-D-arabino-heptonate + phosphate</text>
        <dbReference type="Rhea" id="RHEA:14717"/>
        <dbReference type="ChEBI" id="CHEBI:15377"/>
        <dbReference type="ChEBI" id="CHEBI:16897"/>
        <dbReference type="ChEBI" id="CHEBI:43474"/>
        <dbReference type="ChEBI" id="CHEBI:58394"/>
        <dbReference type="ChEBI" id="CHEBI:58702"/>
        <dbReference type="EC" id="2.5.1.54"/>
    </reaction>
</comment>
<comment type="pathway">
    <text>Metabolic intermediate biosynthesis; chorismate biosynthesis; chorismate from D-erythrose 4-phosphate and phosphoenolpyruvate: step 1/7.</text>
</comment>
<comment type="subcellular location">
    <subcellularLocation>
        <location>Plastid</location>
        <location>Chloroplast</location>
    </subcellularLocation>
</comment>
<comment type="tissue specificity">
    <text>Leaves, stems, tuber and roots.</text>
</comment>
<comment type="induction">
    <text>By glyphosate, wounding and fungal elicitor.</text>
</comment>
<comment type="similarity">
    <text evidence="1">Belongs to the class-II DAHP synthase family.</text>
</comment>
<keyword id="KW-0028">Amino-acid biosynthesis</keyword>
<keyword id="KW-0057">Aromatic amino acid biosynthesis</keyword>
<keyword id="KW-0150">Chloroplast</keyword>
<keyword id="KW-0934">Plastid</keyword>
<keyword id="KW-1185">Reference proteome</keyword>
<keyword id="KW-0808">Transferase</keyword>
<keyword id="KW-0809">Transit peptide</keyword>
<gene>
    <name type="primary">SHKB</name>
    <name type="synonym">ARO2</name>
</gene>